<accession>B7LSC7</accession>
<comment type="function">
    <text evidence="1">Transferase that catalyzes the transfer of sulfur from thiosulfate to thiophilic acceptors such as cyanide or dithiols. May function in a CysM-independent thiosulfate assimilation pathway by catalyzing the conversion of thiosulfate to sulfite, which can then be used for L-cysteine biosynthesis.</text>
</comment>
<comment type="catalytic activity">
    <reaction evidence="1">
        <text>thiosulfate + hydrogen cyanide = thiocyanate + sulfite + 2 H(+)</text>
        <dbReference type="Rhea" id="RHEA:16881"/>
        <dbReference type="ChEBI" id="CHEBI:15378"/>
        <dbReference type="ChEBI" id="CHEBI:17359"/>
        <dbReference type="ChEBI" id="CHEBI:18022"/>
        <dbReference type="ChEBI" id="CHEBI:18407"/>
        <dbReference type="ChEBI" id="CHEBI:33542"/>
        <dbReference type="EC" id="2.8.1.1"/>
    </reaction>
</comment>
<comment type="catalytic activity">
    <reaction evidence="1">
        <text>thiosulfate + [thioredoxin]-dithiol = [thioredoxin]-disulfide + hydrogen sulfide + sulfite + 2 H(+)</text>
        <dbReference type="Rhea" id="RHEA:83859"/>
        <dbReference type="Rhea" id="RHEA-COMP:10698"/>
        <dbReference type="Rhea" id="RHEA-COMP:10700"/>
        <dbReference type="ChEBI" id="CHEBI:15378"/>
        <dbReference type="ChEBI" id="CHEBI:17359"/>
        <dbReference type="ChEBI" id="CHEBI:29919"/>
        <dbReference type="ChEBI" id="CHEBI:29950"/>
        <dbReference type="ChEBI" id="CHEBI:33542"/>
        <dbReference type="ChEBI" id="CHEBI:50058"/>
    </reaction>
</comment>
<comment type="subcellular location">
    <subcellularLocation>
        <location evidence="1">Cytoplasm</location>
    </subcellularLocation>
</comment>
<comment type="similarity">
    <text evidence="1">Belongs to the GlpE family.</text>
</comment>
<protein>
    <recommendedName>
        <fullName evidence="1">Thiosulfate sulfurtransferase GlpE</fullName>
        <ecNumber evidence="1">2.8.1.1</ecNumber>
    </recommendedName>
</protein>
<evidence type="ECO:0000255" key="1">
    <source>
        <dbReference type="HAMAP-Rule" id="MF_01009"/>
    </source>
</evidence>
<keyword id="KW-0963">Cytoplasm</keyword>
<keyword id="KW-0808">Transferase</keyword>
<name>GLPE_ESCF3</name>
<dbReference type="EC" id="2.8.1.1" evidence="1"/>
<dbReference type="EMBL" id="CU928158">
    <property type="protein sequence ID" value="CAQ90870.1"/>
    <property type="molecule type" value="Genomic_DNA"/>
</dbReference>
<dbReference type="RefSeq" id="WP_000371928.1">
    <property type="nucleotide sequence ID" value="NC_011740.1"/>
</dbReference>
<dbReference type="SMR" id="B7LSC7"/>
<dbReference type="GeneID" id="93778571"/>
<dbReference type="KEGG" id="efe:EFER_3393"/>
<dbReference type="HOGENOM" id="CLU_089574_14_0_6"/>
<dbReference type="OrthoDB" id="9811849at2"/>
<dbReference type="Proteomes" id="UP000000745">
    <property type="component" value="Chromosome"/>
</dbReference>
<dbReference type="GO" id="GO:0005737">
    <property type="term" value="C:cytoplasm"/>
    <property type="evidence" value="ECO:0007669"/>
    <property type="project" value="UniProtKB-SubCell"/>
</dbReference>
<dbReference type="GO" id="GO:0004792">
    <property type="term" value="F:thiosulfate-cyanide sulfurtransferase activity"/>
    <property type="evidence" value="ECO:0007669"/>
    <property type="project" value="UniProtKB-UniRule"/>
</dbReference>
<dbReference type="GO" id="GO:0006071">
    <property type="term" value="P:glycerol metabolic process"/>
    <property type="evidence" value="ECO:0007669"/>
    <property type="project" value="UniProtKB-UniRule"/>
</dbReference>
<dbReference type="CDD" id="cd01444">
    <property type="entry name" value="GlpE_ST"/>
    <property type="match status" value="1"/>
</dbReference>
<dbReference type="FunFam" id="3.40.250.10:FF:000007">
    <property type="entry name" value="Thiosulfate sulfurtransferase GlpE"/>
    <property type="match status" value="1"/>
</dbReference>
<dbReference type="Gene3D" id="3.40.250.10">
    <property type="entry name" value="Rhodanese-like domain"/>
    <property type="match status" value="1"/>
</dbReference>
<dbReference type="HAMAP" id="MF_01009">
    <property type="entry name" value="Thiosulf_sulfurtr"/>
    <property type="match status" value="1"/>
</dbReference>
<dbReference type="InterPro" id="IPR050229">
    <property type="entry name" value="GlpE_sulfurtransferase"/>
</dbReference>
<dbReference type="InterPro" id="IPR001763">
    <property type="entry name" value="Rhodanese-like_dom"/>
</dbReference>
<dbReference type="InterPro" id="IPR036873">
    <property type="entry name" value="Rhodanese-like_dom_sf"/>
</dbReference>
<dbReference type="InterPro" id="IPR023695">
    <property type="entry name" value="Thiosulf_sulfurTrfase"/>
</dbReference>
<dbReference type="NCBIfam" id="NF001195">
    <property type="entry name" value="PRK00162.1"/>
    <property type="match status" value="1"/>
</dbReference>
<dbReference type="PANTHER" id="PTHR43031">
    <property type="entry name" value="FAD-DEPENDENT OXIDOREDUCTASE"/>
    <property type="match status" value="1"/>
</dbReference>
<dbReference type="PANTHER" id="PTHR43031:SF6">
    <property type="entry name" value="THIOSULFATE SULFURTRANSFERASE GLPE"/>
    <property type="match status" value="1"/>
</dbReference>
<dbReference type="Pfam" id="PF00581">
    <property type="entry name" value="Rhodanese"/>
    <property type="match status" value="1"/>
</dbReference>
<dbReference type="SMART" id="SM00450">
    <property type="entry name" value="RHOD"/>
    <property type="match status" value="1"/>
</dbReference>
<dbReference type="SUPFAM" id="SSF52821">
    <property type="entry name" value="Rhodanese/Cell cycle control phosphatase"/>
    <property type="match status" value="1"/>
</dbReference>
<dbReference type="PROSITE" id="PS50206">
    <property type="entry name" value="RHODANESE_3"/>
    <property type="match status" value="1"/>
</dbReference>
<feature type="chain" id="PRO_1000190099" description="Thiosulfate sulfurtransferase GlpE">
    <location>
        <begin position="1"/>
        <end position="108"/>
    </location>
</feature>
<feature type="domain" description="Rhodanese" evidence="1">
    <location>
        <begin position="17"/>
        <end position="105"/>
    </location>
</feature>
<feature type="active site" description="Cysteine persulfide intermediate" evidence="1">
    <location>
        <position position="65"/>
    </location>
</feature>
<gene>
    <name evidence="1" type="primary">glpE</name>
    <name type="ordered locus">EFER_3393</name>
</gene>
<reference key="1">
    <citation type="journal article" date="2009" name="PLoS Genet.">
        <title>Organised genome dynamics in the Escherichia coli species results in highly diverse adaptive paths.</title>
        <authorList>
            <person name="Touchon M."/>
            <person name="Hoede C."/>
            <person name="Tenaillon O."/>
            <person name="Barbe V."/>
            <person name="Baeriswyl S."/>
            <person name="Bidet P."/>
            <person name="Bingen E."/>
            <person name="Bonacorsi S."/>
            <person name="Bouchier C."/>
            <person name="Bouvet O."/>
            <person name="Calteau A."/>
            <person name="Chiapello H."/>
            <person name="Clermont O."/>
            <person name="Cruveiller S."/>
            <person name="Danchin A."/>
            <person name="Diard M."/>
            <person name="Dossat C."/>
            <person name="Karoui M.E."/>
            <person name="Frapy E."/>
            <person name="Garry L."/>
            <person name="Ghigo J.M."/>
            <person name="Gilles A.M."/>
            <person name="Johnson J."/>
            <person name="Le Bouguenec C."/>
            <person name="Lescat M."/>
            <person name="Mangenot S."/>
            <person name="Martinez-Jehanne V."/>
            <person name="Matic I."/>
            <person name="Nassif X."/>
            <person name="Oztas S."/>
            <person name="Petit M.A."/>
            <person name="Pichon C."/>
            <person name="Rouy Z."/>
            <person name="Ruf C.S."/>
            <person name="Schneider D."/>
            <person name="Tourret J."/>
            <person name="Vacherie B."/>
            <person name="Vallenet D."/>
            <person name="Medigue C."/>
            <person name="Rocha E.P.C."/>
            <person name="Denamur E."/>
        </authorList>
    </citation>
    <scope>NUCLEOTIDE SEQUENCE [LARGE SCALE GENOMIC DNA]</scope>
    <source>
        <strain>ATCC 35469 / DSM 13698 / BCRC 15582 / CCUG 18766 / IAM 14443 / JCM 21226 / LMG 7866 / NBRC 102419 / NCTC 12128 / CDC 0568-73</strain>
    </source>
</reference>
<sequence>MDQFECINVADAHQKLQEKEAVLVDIRDPQSFAMGHAVQAFHLTNDTLGAFMRDNDFDTPVMVMCYHGNSSKGAAQYLLQQGYDVVYSIDGGFEAWQRQFPAEVAYGA</sequence>
<organism>
    <name type="scientific">Escherichia fergusonii (strain ATCC 35469 / DSM 13698 / CCUG 18766 / IAM 14443 / JCM 21226 / LMG 7866 / NBRC 102419 / NCTC 12128 / CDC 0568-73)</name>
    <dbReference type="NCBI Taxonomy" id="585054"/>
    <lineage>
        <taxon>Bacteria</taxon>
        <taxon>Pseudomonadati</taxon>
        <taxon>Pseudomonadota</taxon>
        <taxon>Gammaproteobacteria</taxon>
        <taxon>Enterobacterales</taxon>
        <taxon>Enterobacteriaceae</taxon>
        <taxon>Escherichia</taxon>
    </lineage>
</organism>
<proteinExistence type="inferred from homology"/>